<protein>
    <recommendedName>
        <fullName evidence="1">Alanine--tRNA ligase</fullName>
        <ecNumber evidence="1">6.1.1.7</ecNumber>
    </recommendedName>
    <alternativeName>
        <fullName evidence="1">Alanyl-tRNA synthetase</fullName>
        <shortName evidence="1">AlaRS</shortName>
    </alternativeName>
</protein>
<organism>
    <name type="scientific">Thiobacillus denitrificans (strain ATCC 25259 / T1)</name>
    <dbReference type="NCBI Taxonomy" id="292415"/>
    <lineage>
        <taxon>Bacteria</taxon>
        <taxon>Pseudomonadati</taxon>
        <taxon>Pseudomonadota</taxon>
        <taxon>Betaproteobacteria</taxon>
        <taxon>Nitrosomonadales</taxon>
        <taxon>Thiobacillaceae</taxon>
        <taxon>Thiobacillus</taxon>
    </lineage>
</organism>
<reference key="1">
    <citation type="journal article" date="2006" name="J. Bacteriol.">
        <title>The genome sequence of the obligately chemolithoautotrophic, facultatively anaerobic bacterium Thiobacillus denitrificans.</title>
        <authorList>
            <person name="Beller H.R."/>
            <person name="Chain P.S."/>
            <person name="Letain T.E."/>
            <person name="Chakicherla A."/>
            <person name="Larimer F.W."/>
            <person name="Richardson P.M."/>
            <person name="Coleman M.A."/>
            <person name="Wood A.P."/>
            <person name="Kelly D.P."/>
        </authorList>
    </citation>
    <scope>NUCLEOTIDE SEQUENCE [LARGE SCALE GENOMIC DNA]</scope>
    <source>
        <strain>ATCC 25259 / T1</strain>
    </source>
</reference>
<dbReference type="EC" id="6.1.1.7" evidence="1"/>
<dbReference type="EMBL" id="CP000116">
    <property type="protein sequence ID" value="AAZ96506.1"/>
    <property type="status" value="ALT_INIT"/>
    <property type="molecule type" value="Genomic_DNA"/>
</dbReference>
<dbReference type="RefSeq" id="WP_041432282.1">
    <property type="nucleotide sequence ID" value="NC_007404.1"/>
</dbReference>
<dbReference type="SMR" id="Q3SLA9"/>
<dbReference type="STRING" id="292415.Tbd_0553"/>
<dbReference type="KEGG" id="tbd:Tbd_0553"/>
<dbReference type="eggNOG" id="COG0013">
    <property type="taxonomic scope" value="Bacteria"/>
</dbReference>
<dbReference type="HOGENOM" id="CLU_004485_1_1_4"/>
<dbReference type="OrthoDB" id="9803884at2"/>
<dbReference type="Proteomes" id="UP000008291">
    <property type="component" value="Chromosome"/>
</dbReference>
<dbReference type="GO" id="GO:0005829">
    <property type="term" value="C:cytosol"/>
    <property type="evidence" value="ECO:0007669"/>
    <property type="project" value="TreeGrafter"/>
</dbReference>
<dbReference type="GO" id="GO:0004813">
    <property type="term" value="F:alanine-tRNA ligase activity"/>
    <property type="evidence" value="ECO:0007669"/>
    <property type="project" value="UniProtKB-UniRule"/>
</dbReference>
<dbReference type="GO" id="GO:0002161">
    <property type="term" value="F:aminoacyl-tRNA deacylase activity"/>
    <property type="evidence" value="ECO:0007669"/>
    <property type="project" value="TreeGrafter"/>
</dbReference>
<dbReference type="GO" id="GO:0005524">
    <property type="term" value="F:ATP binding"/>
    <property type="evidence" value="ECO:0007669"/>
    <property type="project" value="UniProtKB-UniRule"/>
</dbReference>
<dbReference type="GO" id="GO:0000049">
    <property type="term" value="F:tRNA binding"/>
    <property type="evidence" value="ECO:0007669"/>
    <property type="project" value="UniProtKB-KW"/>
</dbReference>
<dbReference type="GO" id="GO:0008270">
    <property type="term" value="F:zinc ion binding"/>
    <property type="evidence" value="ECO:0007669"/>
    <property type="project" value="UniProtKB-UniRule"/>
</dbReference>
<dbReference type="GO" id="GO:0006419">
    <property type="term" value="P:alanyl-tRNA aminoacylation"/>
    <property type="evidence" value="ECO:0007669"/>
    <property type="project" value="UniProtKB-UniRule"/>
</dbReference>
<dbReference type="GO" id="GO:0045892">
    <property type="term" value="P:negative regulation of DNA-templated transcription"/>
    <property type="evidence" value="ECO:0007669"/>
    <property type="project" value="TreeGrafter"/>
</dbReference>
<dbReference type="CDD" id="cd00673">
    <property type="entry name" value="AlaRS_core"/>
    <property type="match status" value="1"/>
</dbReference>
<dbReference type="FunFam" id="2.40.30.130:FF:000001">
    <property type="entry name" value="Alanine--tRNA ligase"/>
    <property type="match status" value="1"/>
</dbReference>
<dbReference type="FunFam" id="3.10.310.40:FF:000001">
    <property type="entry name" value="Alanine--tRNA ligase"/>
    <property type="match status" value="1"/>
</dbReference>
<dbReference type="FunFam" id="3.30.54.20:FF:000001">
    <property type="entry name" value="Alanine--tRNA ligase"/>
    <property type="match status" value="1"/>
</dbReference>
<dbReference type="FunFam" id="3.30.930.10:FF:000004">
    <property type="entry name" value="Alanine--tRNA ligase"/>
    <property type="match status" value="1"/>
</dbReference>
<dbReference type="FunFam" id="3.30.980.10:FF:000004">
    <property type="entry name" value="Alanine--tRNA ligase, cytoplasmic"/>
    <property type="match status" value="1"/>
</dbReference>
<dbReference type="Gene3D" id="2.40.30.130">
    <property type="match status" value="1"/>
</dbReference>
<dbReference type="Gene3D" id="3.10.310.40">
    <property type="match status" value="1"/>
</dbReference>
<dbReference type="Gene3D" id="3.30.54.20">
    <property type="match status" value="1"/>
</dbReference>
<dbReference type="Gene3D" id="6.10.250.550">
    <property type="match status" value="1"/>
</dbReference>
<dbReference type="Gene3D" id="3.30.930.10">
    <property type="entry name" value="Bira Bifunctional Protein, Domain 2"/>
    <property type="match status" value="1"/>
</dbReference>
<dbReference type="Gene3D" id="3.30.980.10">
    <property type="entry name" value="Threonyl-trna Synthetase, Chain A, domain 2"/>
    <property type="match status" value="1"/>
</dbReference>
<dbReference type="HAMAP" id="MF_00036_B">
    <property type="entry name" value="Ala_tRNA_synth_B"/>
    <property type="match status" value="1"/>
</dbReference>
<dbReference type="InterPro" id="IPR045864">
    <property type="entry name" value="aa-tRNA-synth_II/BPL/LPL"/>
</dbReference>
<dbReference type="InterPro" id="IPR002318">
    <property type="entry name" value="Ala-tRNA-lgiase_IIc"/>
</dbReference>
<dbReference type="InterPro" id="IPR018162">
    <property type="entry name" value="Ala-tRNA-ligase_IIc_anticod-bd"/>
</dbReference>
<dbReference type="InterPro" id="IPR018165">
    <property type="entry name" value="Ala-tRNA-synth_IIc_core"/>
</dbReference>
<dbReference type="InterPro" id="IPR018164">
    <property type="entry name" value="Ala-tRNA-synth_IIc_N"/>
</dbReference>
<dbReference type="InterPro" id="IPR050058">
    <property type="entry name" value="Ala-tRNA_ligase"/>
</dbReference>
<dbReference type="InterPro" id="IPR023033">
    <property type="entry name" value="Ala_tRNA_ligase_euk/bac"/>
</dbReference>
<dbReference type="InterPro" id="IPR003156">
    <property type="entry name" value="DHHA1_dom"/>
</dbReference>
<dbReference type="InterPro" id="IPR018163">
    <property type="entry name" value="Thr/Ala-tRNA-synth_IIc_edit"/>
</dbReference>
<dbReference type="InterPro" id="IPR009000">
    <property type="entry name" value="Transl_B-barrel_sf"/>
</dbReference>
<dbReference type="InterPro" id="IPR012947">
    <property type="entry name" value="tRNA_SAD"/>
</dbReference>
<dbReference type="NCBIfam" id="TIGR00344">
    <property type="entry name" value="alaS"/>
    <property type="match status" value="1"/>
</dbReference>
<dbReference type="PANTHER" id="PTHR11777:SF9">
    <property type="entry name" value="ALANINE--TRNA LIGASE, CYTOPLASMIC"/>
    <property type="match status" value="1"/>
</dbReference>
<dbReference type="PANTHER" id="PTHR11777">
    <property type="entry name" value="ALANYL-TRNA SYNTHETASE"/>
    <property type="match status" value="1"/>
</dbReference>
<dbReference type="Pfam" id="PF02272">
    <property type="entry name" value="DHHA1"/>
    <property type="match status" value="1"/>
</dbReference>
<dbReference type="Pfam" id="PF01411">
    <property type="entry name" value="tRNA-synt_2c"/>
    <property type="match status" value="1"/>
</dbReference>
<dbReference type="Pfam" id="PF07973">
    <property type="entry name" value="tRNA_SAD"/>
    <property type="match status" value="1"/>
</dbReference>
<dbReference type="PRINTS" id="PR00980">
    <property type="entry name" value="TRNASYNTHALA"/>
</dbReference>
<dbReference type="SMART" id="SM00863">
    <property type="entry name" value="tRNA_SAD"/>
    <property type="match status" value="1"/>
</dbReference>
<dbReference type="SUPFAM" id="SSF55681">
    <property type="entry name" value="Class II aaRS and biotin synthetases"/>
    <property type="match status" value="1"/>
</dbReference>
<dbReference type="SUPFAM" id="SSF101353">
    <property type="entry name" value="Putative anticodon-binding domain of alanyl-tRNA synthetase (AlaRS)"/>
    <property type="match status" value="1"/>
</dbReference>
<dbReference type="SUPFAM" id="SSF55186">
    <property type="entry name" value="ThrRS/AlaRS common domain"/>
    <property type="match status" value="1"/>
</dbReference>
<dbReference type="SUPFAM" id="SSF50447">
    <property type="entry name" value="Translation proteins"/>
    <property type="match status" value="1"/>
</dbReference>
<dbReference type="PROSITE" id="PS50860">
    <property type="entry name" value="AA_TRNA_LIGASE_II_ALA"/>
    <property type="match status" value="1"/>
</dbReference>
<accession>Q3SLA9</accession>
<evidence type="ECO:0000255" key="1">
    <source>
        <dbReference type="HAMAP-Rule" id="MF_00036"/>
    </source>
</evidence>
<evidence type="ECO:0000305" key="2"/>
<comment type="function">
    <text evidence="1">Catalyzes the attachment of alanine to tRNA(Ala) in a two-step reaction: alanine is first activated by ATP to form Ala-AMP and then transferred to the acceptor end of tRNA(Ala). Also edits incorrectly charged Ser-tRNA(Ala) and Gly-tRNA(Ala) via its editing domain.</text>
</comment>
<comment type="catalytic activity">
    <reaction evidence="1">
        <text>tRNA(Ala) + L-alanine + ATP = L-alanyl-tRNA(Ala) + AMP + diphosphate</text>
        <dbReference type="Rhea" id="RHEA:12540"/>
        <dbReference type="Rhea" id="RHEA-COMP:9657"/>
        <dbReference type="Rhea" id="RHEA-COMP:9923"/>
        <dbReference type="ChEBI" id="CHEBI:30616"/>
        <dbReference type="ChEBI" id="CHEBI:33019"/>
        <dbReference type="ChEBI" id="CHEBI:57972"/>
        <dbReference type="ChEBI" id="CHEBI:78442"/>
        <dbReference type="ChEBI" id="CHEBI:78497"/>
        <dbReference type="ChEBI" id="CHEBI:456215"/>
        <dbReference type="EC" id="6.1.1.7"/>
    </reaction>
</comment>
<comment type="cofactor">
    <cofactor evidence="1">
        <name>Zn(2+)</name>
        <dbReference type="ChEBI" id="CHEBI:29105"/>
    </cofactor>
    <text evidence="1">Binds 1 zinc ion per subunit.</text>
</comment>
<comment type="subcellular location">
    <subcellularLocation>
        <location evidence="1">Cytoplasm</location>
    </subcellularLocation>
</comment>
<comment type="domain">
    <text evidence="1">Consists of three domains; the N-terminal catalytic domain, the editing domain and the C-terminal C-Ala domain. The editing domain removes incorrectly charged amino acids, while the C-Ala domain, along with tRNA(Ala), serves as a bridge to cooperatively bring together the editing and aminoacylation centers thus stimulating deacylation of misacylated tRNAs.</text>
</comment>
<comment type="similarity">
    <text evidence="1">Belongs to the class-II aminoacyl-tRNA synthetase family.</text>
</comment>
<comment type="sequence caution" evidence="2">
    <conflict type="erroneous initiation">
        <sequence resource="EMBL-CDS" id="AAZ96506"/>
    </conflict>
</comment>
<proteinExistence type="inferred from homology"/>
<feature type="chain" id="PRO_0000347853" description="Alanine--tRNA ligase">
    <location>
        <begin position="1"/>
        <end position="872"/>
    </location>
</feature>
<feature type="binding site" evidence="1">
    <location>
        <position position="561"/>
    </location>
    <ligand>
        <name>Zn(2+)</name>
        <dbReference type="ChEBI" id="CHEBI:29105"/>
    </ligand>
</feature>
<feature type="binding site" evidence="1">
    <location>
        <position position="565"/>
    </location>
    <ligand>
        <name>Zn(2+)</name>
        <dbReference type="ChEBI" id="CHEBI:29105"/>
    </ligand>
</feature>
<feature type="binding site" evidence="1">
    <location>
        <position position="662"/>
    </location>
    <ligand>
        <name>Zn(2+)</name>
        <dbReference type="ChEBI" id="CHEBI:29105"/>
    </ligand>
</feature>
<feature type="binding site" evidence="1">
    <location>
        <position position="666"/>
    </location>
    <ligand>
        <name>Zn(2+)</name>
        <dbReference type="ChEBI" id="CHEBI:29105"/>
    </ligand>
</feature>
<sequence length="872" mass="94018">MKSSAIRQSFLDFFASKGHTVVPSSSLVPGNDPTLLFTNAGMVQFKDVFTGQDTRPYSRAVSSQRCVRAGGKHNDLENVGYTARHHTFFEMLGNFSFGDYFKQDAIKYAWEYLTTVLKLPSEKLWVTVYAEDDEAYDIWHNDVGVPKARIVRIGDNKGARYASDNFWAMGDTGPCGPCTEIFYDHGPDVAGGPPGSPDEDGDRYIEIWNNVFMQFNRDEAGTMHPLPKPSVDTGMGLERISAVMQHVHSNYEIDLFQALIAAAARETNTHDLGNNSLKVIADHIRACSFLIVDGVIPGNEGRGYVLRRIIRRAIRHGYKLGARAAFFHRIVPDLGIAMGEAYPELVKAQTRVMDILRQEEERFFETIEHGMGILESELKKLVAGGVFDGELAFKLHDTYGFPLDLTADICREAGVAVDTAAFDAAMARQKAQARGAGKFKLGAGLDYAGEATTFHGYDTLAREASVLALYKDGSAVGELKEGDSGVVVLDHTPFYAESGGQVGDRGTLQSKQGAFEVEDTLKIQAQVFGHHGVVKTGSLAVGDSVLARVDETARARTMRNHSVTHLMHKALREVLGEHVQQKGSLVDSEKTRFDFVQPSPMTAAQIREVEARVNAEILVNTPTQARVMGIEDAQKTGAMMLFGEKYGDEVRVLDIGSSRELCGGTHVARTGDIGLFKIVSESGVAAGVRRVEAITGDNALAYLQAREQEIQQAAAALKAHPAELGAKLAQTLDHVRALEKDLERLKSKLAASAGDELVAQAADINGVKVLAARLDGIDAKGLRETADKLRDKLKSCALVLGTVADGKVSLIAAVTPDVTAKIKAGELVNVVAAQVGGKGGGKPDLAMAGGTDPGALPAALASVEAWVQSRLS</sequence>
<keyword id="KW-0030">Aminoacyl-tRNA synthetase</keyword>
<keyword id="KW-0067">ATP-binding</keyword>
<keyword id="KW-0963">Cytoplasm</keyword>
<keyword id="KW-0436">Ligase</keyword>
<keyword id="KW-0479">Metal-binding</keyword>
<keyword id="KW-0547">Nucleotide-binding</keyword>
<keyword id="KW-0648">Protein biosynthesis</keyword>
<keyword id="KW-1185">Reference proteome</keyword>
<keyword id="KW-0694">RNA-binding</keyword>
<keyword id="KW-0820">tRNA-binding</keyword>
<keyword id="KW-0862">Zinc</keyword>
<gene>
    <name evidence="1" type="primary">alaS</name>
    <name type="ordered locus">Tbd_0553</name>
</gene>
<name>SYA_THIDA</name>